<gene>
    <name evidence="1 2" type="primary">psbA3</name>
    <name type="ordered locus">SYNPCC7002_A2164</name>
</gene>
<protein>
    <recommendedName>
        <fullName evidence="1">Photosystem II protein D1 3</fullName>
        <shortName evidence="1">PSII D1 protein 3</shortName>
        <ecNumber evidence="1">1.10.3.9</ecNumber>
    </recommendedName>
    <alternativeName>
        <fullName evidence="1">Photosystem II Q(B) protein 3</fullName>
    </alternativeName>
</protein>
<dbReference type="EC" id="1.10.3.9" evidence="1"/>
<dbReference type="EMBL" id="CP000951">
    <property type="protein sequence ID" value="ACB00145.1"/>
    <property type="molecule type" value="Genomic_DNA"/>
</dbReference>
<dbReference type="SMR" id="B1XIP3"/>
<dbReference type="STRING" id="32049.SYNPCC7002_A2164"/>
<dbReference type="KEGG" id="syp:SYNPCC7002_A2164"/>
<dbReference type="eggNOG" id="ENOG502Z8GZ">
    <property type="taxonomic scope" value="Bacteria"/>
</dbReference>
<dbReference type="HOGENOM" id="CLU_054206_1_0_3"/>
<dbReference type="Proteomes" id="UP000001688">
    <property type="component" value="Chromosome"/>
</dbReference>
<dbReference type="GO" id="GO:0009523">
    <property type="term" value="C:photosystem II"/>
    <property type="evidence" value="ECO:0007669"/>
    <property type="project" value="UniProtKB-KW"/>
</dbReference>
<dbReference type="GO" id="GO:0031676">
    <property type="term" value="C:plasma membrane-derived thylakoid membrane"/>
    <property type="evidence" value="ECO:0007669"/>
    <property type="project" value="UniProtKB-SubCell"/>
</dbReference>
<dbReference type="GO" id="GO:0016168">
    <property type="term" value="F:chlorophyll binding"/>
    <property type="evidence" value="ECO:0007669"/>
    <property type="project" value="UniProtKB-UniRule"/>
</dbReference>
<dbReference type="GO" id="GO:0045156">
    <property type="term" value="F:electron transporter, transferring electrons within the cyclic electron transport pathway of photosynthesis activity"/>
    <property type="evidence" value="ECO:0007669"/>
    <property type="project" value="InterPro"/>
</dbReference>
<dbReference type="GO" id="GO:0005506">
    <property type="term" value="F:iron ion binding"/>
    <property type="evidence" value="ECO:0007669"/>
    <property type="project" value="UniProtKB-UniRule"/>
</dbReference>
<dbReference type="GO" id="GO:0016682">
    <property type="term" value="F:oxidoreductase activity, acting on diphenols and related substances as donors, oxygen as acceptor"/>
    <property type="evidence" value="ECO:0007669"/>
    <property type="project" value="UniProtKB-UniRule"/>
</dbReference>
<dbReference type="GO" id="GO:0010242">
    <property type="term" value="F:oxygen evolving activity"/>
    <property type="evidence" value="ECO:0007669"/>
    <property type="project" value="UniProtKB-EC"/>
</dbReference>
<dbReference type="GO" id="GO:0009772">
    <property type="term" value="P:photosynthetic electron transport in photosystem II"/>
    <property type="evidence" value="ECO:0007669"/>
    <property type="project" value="InterPro"/>
</dbReference>
<dbReference type="GO" id="GO:0009635">
    <property type="term" value="P:response to herbicide"/>
    <property type="evidence" value="ECO:0007669"/>
    <property type="project" value="UniProtKB-KW"/>
</dbReference>
<dbReference type="FunFam" id="1.20.85.10:FF:000002">
    <property type="entry name" value="Photosystem II protein D1"/>
    <property type="match status" value="1"/>
</dbReference>
<dbReference type="Gene3D" id="1.20.85.10">
    <property type="entry name" value="Photosystem II protein D1-like"/>
    <property type="match status" value="2"/>
</dbReference>
<dbReference type="HAMAP" id="MF_01379">
    <property type="entry name" value="PSII_PsbA_D1"/>
    <property type="match status" value="1"/>
</dbReference>
<dbReference type="InterPro" id="IPR055266">
    <property type="entry name" value="D1/D2"/>
</dbReference>
<dbReference type="InterPro" id="IPR036854">
    <property type="entry name" value="Photo_II_D1/D2_sf"/>
</dbReference>
<dbReference type="InterPro" id="IPR000484">
    <property type="entry name" value="Photo_RC_L/M"/>
</dbReference>
<dbReference type="InterPro" id="IPR055265">
    <property type="entry name" value="Photo_RC_L/M_CS"/>
</dbReference>
<dbReference type="InterPro" id="IPR005867">
    <property type="entry name" value="PSII_D1"/>
</dbReference>
<dbReference type="NCBIfam" id="TIGR01151">
    <property type="entry name" value="psbA"/>
    <property type="match status" value="1"/>
</dbReference>
<dbReference type="PANTHER" id="PTHR33149:SF12">
    <property type="entry name" value="PHOTOSYSTEM II D2 PROTEIN"/>
    <property type="match status" value="1"/>
</dbReference>
<dbReference type="PANTHER" id="PTHR33149">
    <property type="entry name" value="PHOTOSYSTEM II PROTEIN D1"/>
    <property type="match status" value="1"/>
</dbReference>
<dbReference type="Pfam" id="PF00124">
    <property type="entry name" value="Photo_RC"/>
    <property type="match status" value="1"/>
</dbReference>
<dbReference type="PRINTS" id="PR00256">
    <property type="entry name" value="REACTNCENTRE"/>
</dbReference>
<dbReference type="SUPFAM" id="SSF81483">
    <property type="entry name" value="Bacterial photosystem II reaction centre, L and M subunits"/>
    <property type="match status" value="1"/>
</dbReference>
<dbReference type="PROSITE" id="PS00244">
    <property type="entry name" value="REACTION_CENTER"/>
    <property type="match status" value="1"/>
</dbReference>
<keyword id="KW-0106">Calcium</keyword>
<keyword id="KW-0148">Chlorophyll</keyword>
<keyword id="KW-0157">Chromophore</keyword>
<keyword id="KW-0249">Electron transport</keyword>
<keyword id="KW-0359">Herbicide resistance</keyword>
<keyword id="KW-0408">Iron</keyword>
<keyword id="KW-0460">Magnesium</keyword>
<keyword id="KW-0464">Manganese</keyword>
<keyword id="KW-0472">Membrane</keyword>
<keyword id="KW-0479">Metal-binding</keyword>
<keyword id="KW-0560">Oxidoreductase</keyword>
<keyword id="KW-0602">Photosynthesis</keyword>
<keyword id="KW-0604">Photosystem II</keyword>
<keyword id="KW-1185">Reference proteome</keyword>
<keyword id="KW-0793">Thylakoid</keyword>
<keyword id="KW-0812">Transmembrane</keyword>
<keyword id="KW-1133">Transmembrane helix</keyword>
<keyword id="KW-0813">Transport</keyword>
<accession>B1XIP3</accession>
<name>PSBA3_PICP2</name>
<organism>
    <name type="scientific">Picosynechococcus sp. (strain ATCC 27264 / PCC 7002 / PR-6)</name>
    <name type="common">Agmenellum quadruplicatum</name>
    <dbReference type="NCBI Taxonomy" id="32049"/>
    <lineage>
        <taxon>Bacteria</taxon>
        <taxon>Bacillati</taxon>
        <taxon>Cyanobacteriota</taxon>
        <taxon>Cyanophyceae</taxon>
        <taxon>Oscillatoriophycideae</taxon>
        <taxon>Chroococcales</taxon>
        <taxon>Geminocystaceae</taxon>
        <taxon>Picosynechococcus</taxon>
    </lineage>
</organism>
<reference key="1">
    <citation type="submission" date="2008-02" db="EMBL/GenBank/DDBJ databases">
        <title>Complete sequence of Synechococcus sp. PCC 7002.</title>
        <authorList>
            <person name="Li T."/>
            <person name="Zhao J."/>
            <person name="Zhao C."/>
            <person name="Liu Z."/>
            <person name="Zhao F."/>
            <person name="Marquardt J."/>
            <person name="Nomura C.T."/>
            <person name="Persson S."/>
            <person name="Detter J.C."/>
            <person name="Richardson P.M."/>
            <person name="Lanz C."/>
            <person name="Schuster S.C."/>
            <person name="Wang J."/>
            <person name="Li S."/>
            <person name="Huang X."/>
            <person name="Cai T."/>
            <person name="Yu Z."/>
            <person name="Luo J."/>
            <person name="Zhao J."/>
            <person name="Bryant D.A."/>
        </authorList>
    </citation>
    <scope>NUCLEOTIDE SEQUENCE [LARGE SCALE GENOMIC DNA]</scope>
    <source>
        <strain>ATCC 27264 / PCC 7002 / PR-6</strain>
    </source>
</reference>
<comment type="function">
    <text evidence="1">Photosystem II (PSII) is a light-driven water:plastoquinone oxidoreductase that uses light energy to abstract electrons from H(2)O, generating O(2) and a proton gradient subsequently used for ATP formation. It consists of a core antenna complex that captures photons, and an electron transfer chain that converts photonic excitation into a charge separation. The D1/D2 (PsbA/PsbD) reaction center heterodimer binds P680, the primary electron donor of PSII as well as several subsequent electron acceptors.</text>
</comment>
<comment type="catalytic activity">
    <reaction evidence="1">
        <text>2 a plastoquinone + 4 hnu + 2 H2O = 2 a plastoquinol + O2</text>
        <dbReference type="Rhea" id="RHEA:36359"/>
        <dbReference type="Rhea" id="RHEA-COMP:9561"/>
        <dbReference type="Rhea" id="RHEA-COMP:9562"/>
        <dbReference type="ChEBI" id="CHEBI:15377"/>
        <dbReference type="ChEBI" id="CHEBI:15379"/>
        <dbReference type="ChEBI" id="CHEBI:17757"/>
        <dbReference type="ChEBI" id="CHEBI:30212"/>
        <dbReference type="ChEBI" id="CHEBI:62192"/>
        <dbReference type="EC" id="1.10.3.9"/>
    </reaction>
</comment>
<comment type="cofactor">
    <text evidence="1">The D1/D2 heterodimer binds P680, chlorophylls that are the primary electron donor of PSII, and subsequent electron acceptors. It shares a non-heme iron and each subunit binds pheophytin, quinone, additional chlorophylls, carotenoids and lipids. D1 provides most of the ligands for the Mn4-Ca-O5 cluster of the oxygen-evolving complex (OEC). There is also a Cl(-1) ion associated with D1 and D2, which is required for oxygen evolution. The PSII complex binds additional chlorophylls, carotenoids and specific lipids.</text>
</comment>
<comment type="subunit">
    <text evidence="1">PSII is composed of 1 copy each of membrane proteins PsbA, PsbB, PsbC, PsbD, PsbE, PsbF, PsbH, PsbI, PsbJ, PsbK, PsbL, PsbM, PsbT, PsbX, PsbY, PsbZ, Psb30/Ycf12, peripheral proteins PsbO, CyanoQ (PsbQ), PsbU, PsbV and a large number of cofactors. It forms dimeric complexes.</text>
</comment>
<comment type="subcellular location">
    <subcellularLocation>
        <location evidence="1">Cellular thylakoid membrane</location>
        <topology evidence="1">Multi-pass membrane protein</topology>
    </subcellularLocation>
</comment>
<comment type="PTM">
    <text evidence="1">Tyr-161 forms a radical intermediate that is referred to as redox-active TyrZ, YZ or Y-Z.</text>
</comment>
<comment type="PTM">
    <text evidence="1">C-terminally processed by CtpA; processing is essential to allow assembly of the oxygen-evolving complex and thus photosynthetic growth.</text>
</comment>
<comment type="miscellaneous">
    <text evidence="1">Cyanobacteria usually contain more than 2 copies of the psbA gene.</text>
</comment>
<comment type="miscellaneous">
    <text evidence="1">2 of the reaction center chlorophylls (ChlD1 and ChlD2) are entirely coordinated by water.</text>
</comment>
<comment type="miscellaneous">
    <text evidence="1">Herbicides such as atrazine, BNT, diuron or ioxynil bind in the Q(B) binding site and block subsequent electron transfer.</text>
</comment>
<comment type="similarity">
    <text evidence="1">Belongs to the reaction center PufL/M/PsbA/D family.</text>
</comment>
<feature type="chain" id="PRO_0000339934" description="Photosystem II protein D1 3" evidence="1">
    <location>
        <begin position="1"/>
        <end position="344"/>
    </location>
</feature>
<feature type="propeptide" id="PRO_0000339935" evidence="1">
    <location>
        <begin position="345"/>
        <end position="360"/>
    </location>
</feature>
<feature type="transmembrane region" description="Helical" evidence="1">
    <location>
        <begin position="29"/>
        <end position="46"/>
    </location>
</feature>
<feature type="transmembrane region" description="Helical" evidence="1">
    <location>
        <begin position="118"/>
        <end position="133"/>
    </location>
</feature>
<feature type="transmembrane region" description="Helical" evidence="1">
    <location>
        <begin position="142"/>
        <end position="156"/>
    </location>
</feature>
<feature type="transmembrane region" description="Helical" evidence="1">
    <location>
        <begin position="197"/>
        <end position="218"/>
    </location>
</feature>
<feature type="transmembrane region" description="Helical" evidence="1">
    <location>
        <begin position="274"/>
        <end position="288"/>
    </location>
</feature>
<feature type="binding site" description="axial binding residue" evidence="1">
    <location>
        <position position="118"/>
    </location>
    <ligand>
        <name>chlorophyll a</name>
        <dbReference type="ChEBI" id="CHEBI:58416"/>
        <label>ChlzD1</label>
    </ligand>
    <ligandPart>
        <name>Mg</name>
        <dbReference type="ChEBI" id="CHEBI:25107"/>
    </ligandPart>
</feature>
<feature type="binding site" evidence="1">
    <location>
        <position position="126"/>
    </location>
    <ligand>
        <name>pheophytin a</name>
        <dbReference type="ChEBI" id="CHEBI:136840"/>
        <label>D1</label>
    </ligand>
</feature>
<feature type="binding site" evidence="1">
    <location>
        <position position="170"/>
    </location>
    <ligand>
        <name>[CaMn4O5] cluster</name>
        <dbReference type="ChEBI" id="CHEBI:189552"/>
    </ligand>
</feature>
<feature type="binding site" evidence="1">
    <location>
        <position position="189"/>
    </location>
    <ligand>
        <name>[CaMn4O5] cluster</name>
        <dbReference type="ChEBI" id="CHEBI:189552"/>
    </ligand>
</feature>
<feature type="binding site" description="axial binding residue" evidence="1">
    <location>
        <position position="198"/>
    </location>
    <ligand>
        <name>chlorophyll a</name>
        <dbReference type="ChEBI" id="CHEBI:58416"/>
        <label>PD1</label>
    </ligand>
    <ligandPart>
        <name>Mg</name>
        <dbReference type="ChEBI" id="CHEBI:25107"/>
    </ligandPart>
</feature>
<feature type="binding site" evidence="1">
    <location>
        <position position="215"/>
    </location>
    <ligand>
        <name>a quinone</name>
        <dbReference type="ChEBI" id="CHEBI:132124"/>
        <label>B</label>
    </ligand>
</feature>
<feature type="binding site" evidence="1">
    <location>
        <position position="215"/>
    </location>
    <ligand>
        <name>Fe cation</name>
        <dbReference type="ChEBI" id="CHEBI:24875"/>
        <note>ligand shared with heterodimeric partner</note>
    </ligand>
</feature>
<feature type="binding site" evidence="1">
    <location>
        <begin position="264"/>
        <end position="265"/>
    </location>
    <ligand>
        <name>a quinone</name>
        <dbReference type="ChEBI" id="CHEBI:132124"/>
        <label>B</label>
    </ligand>
</feature>
<feature type="binding site" evidence="1">
    <location>
        <position position="272"/>
    </location>
    <ligand>
        <name>Fe cation</name>
        <dbReference type="ChEBI" id="CHEBI:24875"/>
        <note>ligand shared with heterodimeric partner</note>
    </ligand>
</feature>
<feature type="binding site" evidence="1">
    <location>
        <position position="332"/>
    </location>
    <ligand>
        <name>[CaMn4O5] cluster</name>
        <dbReference type="ChEBI" id="CHEBI:189552"/>
    </ligand>
</feature>
<feature type="binding site" evidence="1">
    <location>
        <position position="333"/>
    </location>
    <ligand>
        <name>[CaMn4O5] cluster</name>
        <dbReference type="ChEBI" id="CHEBI:189552"/>
    </ligand>
</feature>
<feature type="binding site" evidence="1">
    <location>
        <position position="342"/>
    </location>
    <ligand>
        <name>[CaMn4O5] cluster</name>
        <dbReference type="ChEBI" id="CHEBI:189552"/>
    </ligand>
</feature>
<feature type="binding site" evidence="1">
    <location>
        <position position="344"/>
    </location>
    <ligand>
        <name>[CaMn4O5] cluster</name>
        <dbReference type="ChEBI" id="CHEBI:189552"/>
    </ligand>
</feature>
<feature type="site" description="Tyrosine radical intermediate" evidence="1">
    <location>
        <position position="161"/>
    </location>
</feature>
<feature type="site" description="Stabilizes free radical intermediate" evidence="1">
    <location>
        <position position="190"/>
    </location>
</feature>
<feature type="site" description="Cleavage; by CtpA" evidence="1">
    <location>
        <begin position="344"/>
        <end position="345"/>
    </location>
</feature>
<proteinExistence type="inferred from homology"/>
<evidence type="ECO:0000255" key="1">
    <source>
        <dbReference type="HAMAP-Rule" id="MF_01379"/>
    </source>
</evidence>
<evidence type="ECO:0000305" key="2"/>
<sequence>MTTLLQQQGSANLWERFCQWVTSTENRFYVGWFGVLMIPTLLTATICFILAFVAAPPVDIDGIREPVAGSLLYGNNIITAAVVPSSNAIGLHFYPIWDAANLDEWLYNGGPYQLIVFHFLLGIFSYMGREWELSYRLGMRPWIAVAYSAPVAAATAVLLVYSIGQGSFSDGLPLGISGTFNFMFVLQAEHNVLMHPFHMLGVAGVFGGALFSAMHGSLVTSSLIRETTETESQNSGYRFGQEEETYNIVAAHGYFGRLIFQYASFNNSRALHFFLAAWPVIGIWFASLAVACFAFNLNGFNFNQSLLDSQGRVINTWADILNRANLGIEAMHERNVHNFPLDLAAGDQAPVALQAPAING</sequence>